<name>LPXK_SHESR</name>
<proteinExistence type="inferred from homology"/>
<organism>
    <name type="scientific">Shewanella sp. (strain MR-7)</name>
    <dbReference type="NCBI Taxonomy" id="60481"/>
    <lineage>
        <taxon>Bacteria</taxon>
        <taxon>Pseudomonadati</taxon>
        <taxon>Pseudomonadota</taxon>
        <taxon>Gammaproteobacteria</taxon>
        <taxon>Alteromonadales</taxon>
        <taxon>Shewanellaceae</taxon>
        <taxon>Shewanella</taxon>
    </lineage>
</organism>
<reference key="1">
    <citation type="submission" date="2006-08" db="EMBL/GenBank/DDBJ databases">
        <title>Complete sequence of chromosome 1 of Shewanella sp. MR-7.</title>
        <authorList>
            <person name="Copeland A."/>
            <person name="Lucas S."/>
            <person name="Lapidus A."/>
            <person name="Barry K."/>
            <person name="Detter J.C."/>
            <person name="Glavina del Rio T."/>
            <person name="Hammon N."/>
            <person name="Israni S."/>
            <person name="Dalin E."/>
            <person name="Tice H."/>
            <person name="Pitluck S."/>
            <person name="Kiss H."/>
            <person name="Brettin T."/>
            <person name="Bruce D."/>
            <person name="Han C."/>
            <person name="Tapia R."/>
            <person name="Gilna P."/>
            <person name="Schmutz J."/>
            <person name="Larimer F."/>
            <person name="Land M."/>
            <person name="Hauser L."/>
            <person name="Kyrpides N."/>
            <person name="Mikhailova N."/>
            <person name="Nealson K."/>
            <person name="Konstantinidis K."/>
            <person name="Klappenbach J."/>
            <person name="Tiedje J."/>
            <person name="Richardson P."/>
        </authorList>
    </citation>
    <scope>NUCLEOTIDE SEQUENCE [LARGE SCALE GENOMIC DNA]</scope>
    <source>
        <strain>MR-7</strain>
    </source>
</reference>
<comment type="function">
    <text evidence="1">Transfers the gamma-phosphate of ATP to the 4'-position of a tetraacyldisaccharide 1-phosphate intermediate (termed DS-1-P) to form tetraacyldisaccharide 1,4'-bis-phosphate (lipid IVA).</text>
</comment>
<comment type="catalytic activity">
    <reaction evidence="1">
        <text>a lipid A disaccharide + ATP = a lipid IVA + ADP + H(+)</text>
        <dbReference type="Rhea" id="RHEA:67840"/>
        <dbReference type="ChEBI" id="CHEBI:15378"/>
        <dbReference type="ChEBI" id="CHEBI:30616"/>
        <dbReference type="ChEBI" id="CHEBI:176343"/>
        <dbReference type="ChEBI" id="CHEBI:176425"/>
        <dbReference type="ChEBI" id="CHEBI:456216"/>
        <dbReference type="EC" id="2.7.1.130"/>
    </reaction>
</comment>
<comment type="pathway">
    <text evidence="1">Glycolipid biosynthesis; lipid IV(A) biosynthesis; lipid IV(A) from (3R)-3-hydroxytetradecanoyl-[acyl-carrier-protein] and UDP-N-acetyl-alpha-D-glucosamine: step 6/6.</text>
</comment>
<comment type="similarity">
    <text evidence="1">Belongs to the LpxK family.</text>
</comment>
<accession>Q0HTS9</accession>
<keyword id="KW-0067">ATP-binding</keyword>
<keyword id="KW-0418">Kinase</keyword>
<keyword id="KW-0441">Lipid A biosynthesis</keyword>
<keyword id="KW-0444">Lipid biosynthesis</keyword>
<keyword id="KW-0443">Lipid metabolism</keyword>
<keyword id="KW-0547">Nucleotide-binding</keyword>
<keyword id="KW-0808">Transferase</keyword>
<protein>
    <recommendedName>
        <fullName evidence="1">Tetraacyldisaccharide 4'-kinase</fullName>
        <ecNumber evidence="1">2.7.1.130</ecNumber>
    </recommendedName>
    <alternativeName>
        <fullName evidence="1">Lipid A 4'-kinase</fullName>
    </alternativeName>
</protein>
<gene>
    <name evidence="1" type="primary">lpxK</name>
    <name type="ordered locus">Shewmr7_2491</name>
</gene>
<sequence>MQVLVNKIWYEGHPLRWLLLPFSVLFALITAIRRSLFRLGLKSQTPLPVPVIVVGNITVGGSGKTPTVIYLIELLRQQGFNPGVISRGYGADIQGVKVVTAADSAASVGDEPAMIVARTGVPMVVGAKRVDTAKALLAQFAVDVIICDDGLQHYALGRDIELVVIDGKRGLGNRHLLPAGPLREGAWRLNQVDFVVVNGGPAQANQYEMQLSPSAVLPVNPKAVAVFDPTQPVVAMAGIGHPARFFETLTQQGFQLALSHGFDDHQAYDKEVLCELAASRPLMMTEKDAVKCRDFAQENWWYLAVDAKLSPQFDQQLLSRVRSVAAAKQGKSHGV</sequence>
<feature type="chain" id="PRO_0000291247" description="Tetraacyldisaccharide 4'-kinase">
    <location>
        <begin position="1"/>
        <end position="335"/>
    </location>
</feature>
<feature type="binding site" evidence="1">
    <location>
        <begin position="58"/>
        <end position="65"/>
    </location>
    <ligand>
        <name>ATP</name>
        <dbReference type="ChEBI" id="CHEBI:30616"/>
    </ligand>
</feature>
<evidence type="ECO:0000255" key="1">
    <source>
        <dbReference type="HAMAP-Rule" id="MF_00409"/>
    </source>
</evidence>
<dbReference type="EC" id="2.7.1.130" evidence="1"/>
<dbReference type="EMBL" id="CP000444">
    <property type="protein sequence ID" value="ABI43476.1"/>
    <property type="molecule type" value="Genomic_DNA"/>
</dbReference>
<dbReference type="SMR" id="Q0HTS9"/>
<dbReference type="KEGG" id="shm:Shewmr7_2491"/>
<dbReference type="HOGENOM" id="CLU_038816_2_0_6"/>
<dbReference type="UniPathway" id="UPA00359">
    <property type="reaction ID" value="UER00482"/>
</dbReference>
<dbReference type="GO" id="GO:0005886">
    <property type="term" value="C:plasma membrane"/>
    <property type="evidence" value="ECO:0007669"/>
    <property type="project" value="TreeGrafter"/>
</dbReference>
<dbReference type="GO" id="GO:0005524">
    <property type="term" value="F:ATP binding"/>
    <property type="evidence" value="ECO:0007669"/>
    <property type="project" value="UniProtKB-UniRule"/>
</dbReference>
<dbReference type="GO" id="GO:0009029">
    <property type="term" value="F:tetraacyldisaccharide 4'-kinase activity"/>
    <property type="evidence" value="ECO:0007669"/>
    <property type="project" value="UniProtKB-UniRule"/>
</dbReference>
<dbReference type="GO" id="GO:0009245">
    <property type="term" value="P:lipid A biosynthetic process"/>
    <property type="evidence" value="ECO:0007669"/>
    <property type="project" value="UniProtKB-UniRule"/>
</dbReference>
<dbReference type="GO" id="GO:0009244">
    <property type="term" value="P:lipopolysaccharide core region biosynthetic process"/>
    <property type="evidence" value="ECO:0007669"/>
    <property type="project" value="TreeGrafter"/>
</dbReference>
<dbReference type="CDD" id="cd01983">
    <property type="entry name" value="SIMIBI"/>
    <property type="match status" value="1"/>
</dbReference>
<dbReference type="HAMAP" id="MF_00409">
    <property type="entry name" value="LpxK"/>
    <property type="match status" value="1"/>
</dbReference>
<dbReference type="InterPro" id="IPR003758">
    <property type="entry name" value="LpxK"/>
</dbReference>
<dbReference type="InterPro" id="IPR027417">
    <property type="entry name" value="P-loop_NTPase"/>
</dbReference>
<dbReference type="NCBIfam" id="TIGR00682">
    <property type="entry name" value="lpxK"/>
    <property type="match status" value="1"/>
</dbReference>
<dbReference type="PANTHER" id="PTHR42724">
    <property type="entry name" value="TETRAACYLDISACCHARIDE 4'-KINASE"/>
    <property type="match status" value="1"/>
</dbReference>
<dbReference type="PANTHER" id="PTHR42724:SF1">
    <property type="entry name" value="TETRAACYLDISACCHARIDE 4'-KINASE, MITOCHONDRIAL-RELATED"/>
    <property type="match status" value="1"/>
</dbReference>
<dbReference type="Pfam" id="PF02606">
    <property type="entry name" value="LpxK"/>
    <property type="match status" value="1"/>
</dbReference>
<dbReference type="SUPFAM" id="SSF52540">
    <property type="entry name" value="P-loop containing nucleoside triphosphate hydrolases"/>
    <property type="match status" value="1"/>
</dbReference>